<protein>
    <recommendedName>
        <fullName evidence="1">3-isopropylmalate dehydratase small subunit</fullName>
        <ecNumber evidence="1">4.2.1.33</ecNumber>
    </recommendedName>
    <alternativeName>
        <fullName evidence="1">Alpha-IPM isomerase</fullName>
        <shortName evidence="1">IPMI</shortName>
    </alternativeName>
    <alternativeName>
        <fullName evidence="1">Isopropylmalate isomerase</fullName>
    </alternativeName>
</protein>
<comment type="function">
    <text evidence="1">Catalyzes the isomerization between 2-isopropylmalate and 3-isopropylmalate, via the formation of 2-isopropylmaleate.</text>
</comment>
<comment type="catalytic activity">
    <reaction evidence="1">
        <text>(2R,3S)-3-isopropylmalate = (2S)-2-isopropylmalate</text>
        <dbReference type="Rhea" id="RHEA:32287"/>
        <dbReference type="ChEBI" id="CHEBI:1178"/>
        <dbReference type="ChEBI" id="CHEBI:35121"/>
        <dbReference type="EC" id="4.2.1.33"/>
    </reaction>
</comment>
<comment type="pathway">
    <text evidence="1">Amino-acid biosynthesis; L-leucine biosynthesis; L-leucine from 3-methyl-2-oxobutanoate: step 2/4.</text>
</comment>
<comment type="subunit">
    <text evidence="1">Heterodimer of LeuC and LeuD.</text>
</comment>
<comment type="similarity">
    <text evidence="1">Belongs to the LeuD family. LeuD type 1 subfamily.</text>
</comment>
<dbReference type="EC" id="4.2.1.33" evidence="1"/>
<dbReference type="EMBL" id="CU468135">
    <property type="protein sequence ID" value="CAO95785.1"/>
    <property type="molecule type" value="Genomic_DNA"/>
</dbReference>
<dbReference type="RefSeq" id="WP_012440487.1">
    <property type="nucleotide sequence ID" value="NC_010694.1"/>
</dbReference>
<dbReference type="SMR" id="B2VDA2"/>
<dbReference type="STRING" id="465817.ETA_07390"/>
<dbReference type="KEGG" id="eta:ETA_07390"/>
<dbReference type="eggNOG" id="COG0066">
    <property type="taxonomic scope" value="Bacteria"/>
</dbReference>
<dbReference type="HOGENOM" id="CLU_081378_0_3_6"/>
<dbReference type="OrthoDB" id="9777465at2"/>
<dbReference type="UniPathway" id="UPA00048">
    <property type="reaction ID" value="UER00071"/>
</dbReference>
<dbReference type="Proteomes" id="UP000001726">
    <property type="component" value="Chromosome"/>
</dbReference>
<dbReference type="GO" id="GO:0009316">
    <property type="term" value="C:3-isopropylmalate dehydratase complex"/>
    <property type="evidence" value="ECO:0007669"/>
    <property type="project" value="InterPro"/>
</dbReference>
<dbReference type="GO" id="GO:0003861">
    <property type="term" value="F:3-isopropylmalate dehydratase activity"/>
    <property type="evidence" value="ECO:0007669"/>
    <property type="project" value="UniProtKB-UniRule"/>
</dbReference>
<dbReference type="GO" id="GO:0009098">
    <property type="term" value="P:L-leucine biosynthetic process"/>
    <property type="evidence" value="ECO:0007669"/>
    <property type="project" value="UniProtKB-UniRule"/>
</dbReference>
<dbReference type="CDD" id="cd01577">
    <property type="entry name" value="IPMI_Swivel"/>
    <property type="match status" value="1"/>
</dbReference>
<dbReference type="FunFam" id="3.20.19.10:FF:000003">
    <property type="entry name" value="3-isopropylmalate dehydratase small subunit"/>
    <property type="match status" value="1"/>
</dbReference>
<dbReference type="Gene3D" id="3.20.19.10">
    <property type="entry name" value="Aconitase, domain 4"/>
    <property type="match status" value="1"/>
</dbReference>
<dbReference type="HAMAP" id="MF_01031">
    <property type="entry name" value="LeuD_type1"/>
    <property type="match status" value="1"/>
</dbReference>
<dbReference type="InterPro" id="IPR004431">
    <property type="entry name" value="3-IsopropMal_deHydase_ssu"/>
</dbReference>
<dbReference type="InterPro" id="IPR015928">
    <property type="entry name" value="Aconitase/3IPM_dehydase_swvl"/>
</dbReference>
<dbReference type="InterPro" id="IPR000573">
    <property type="entry name" value="AconitaseA/IPMdHydase_ssu_swvl"/>
</dbReference>
<dbReference type="InterPro" id="IPR033940">
    <property type="entry name" value="IPMI_Swivel"/>
</dbReference>
<dbReference type="InterPro" id="IPR050075">
    <property type="entry name" value="LeuD"/>
</dbReference>
<dbReference type="NCBIfam" id="TIGR00171">
    <property type="entry name" value="leuD"/>
    <property type="match status" value="1"/>
</dbReference>
<dbReference type="NCBIfam" id="NF002458">
    <property type="entry name" value="PRK01641.1"/>
    <property type="match status" value="1"/>
</dbReference>
<dbReference type="PANTHER" id="PTHR43345:SF5">
    <property type="entry name" value="3-ISOPROPYLMALATE DEHYDRATASE SMALL SUBUNIT"/>
    <property type="match status" value="1"/>
</dbReference>
<dbReference type="PANTHER" id="PTHR43345">
    <property type="entry name" value="3-ISOPROPYLMALATE DEHYDRATASE SMALL SUBUNIT 2-RELATED-RELATED"/>
    <property type="match status" value="1"/>
</dbReference>
<dbReference type="Pfam" id="PF00694">
    <property type="entry name" value="Aconitase_C"/>
    <property type="match status" value="1"/>
</dbReference>
<dbReference type="SUPFAM" id="SSF52016">
    <property type="entry name" value="LeuD/IlvD-like"/>
    <property type="match status" value="1"/>
</dbReference>
<sequence length="201" mass="22437">MAKKFTQHRGIVLPLDAANVDTDAIIPKQFLQMVTRTGFGRNLFYDWRYLDAEGQLANPDFVLNKPEFSGASIMLTRENFGCGSSREHAPWALTDYGIQAIIGSGFADIFANNAFNNQLLLVTLSEQQVDELFQQVAAQPGIGFTVDLESQQVQAGDNIYPFAIDPFRRHCLLNGLDAIGLTLQHDADISAWERQQPSFLR</sequence>
<organism>
    <name type="scientific">Erwinia tasmaniensis (strain DSM 17950 / CFBP 7177 / CIP 109463 / NCPPB 4357 / Et1/99)</name>
    <dbReference type="NCBI Taxonomy" id="465817"/>
    <lineage>
        <taxon>Bacteria</taxon>
        <taxon>Pseudomonadati</taxon>
        <taxon>Pseudomonadota</taxon>
        <taxon>Gammaproteobacteria</taxon>
        <taxon>Enterobacterales</taxon>
        <taxon>Erwiniaceae</taxon>
        <taxon>Erwinia</taxon>
    </lineage>
</organism>
<name>LEUD_ERWT9</name>
<gene>
    <name evidence="1" type="primary">leuD</name>
    <name type="ordered locus">ETA_07390</name>
</gene>
<reference key="1">
    <citation type="journal article" date="2008" name="Environ. Microbiol.">
        <title>The genome of Erwinia tasmaniensis strain Et1/99, a non-pathogenic bacterium in the genus Erwinia.</title>
        <authorList>
            <person name="Kube M."/>
            <person name="Migdoll A.M."/>
            <person name="Mueller I."/>
            <person name="Kuhl H."/>
            <person name="Beck A."/>
            <person name="Reinhardt R."/>
            <person name="Geider K."/>
        </authorList>
    </citation>
    <scope>NUCLEOTIDE SEQUENCE [LARGE SCALE GENOMIC DNA]</scope>
    <source>
        <strain>DSM 17950 / CFBP 7177 / CIP 109463 / NCPPB 4357 / Et1/99</strain>
    </source>
</reference>
<accession>B2VDA2</accession>
<feature type="chain" id="PRO_1000135807" description="3-isopropylmalate dehydratase small subunit">
    <location>
        <begin position="1"/>
        <end position="201"/>
    </location>
</feature>
<proteinExistence type="inferred from homology"/>
<evidence type="ECO:0000255" key="1">
    <source>
        <dbReference type="HAMAP-Rule" id="MF_01031"/>
    </source>
</evidence>
<keyword id="KW-0028">Amino-acid biosynthesis</keyword>
<keyword id="KW-0100">Branched-chain amino acid biosynthesis</keyword>
<keyword id="KW-0432">Leucine biosynthesis</keyword>
<keyword id="KW-0456">Lyase</keyword>
<keyword id="KW-1185">Reference proteome</keyword>